<accession>P0CAR5</accession>
<keyword id="KW-0008">Acetylcholine receptor inhibiting toxin</keyword>
<keyword id="KW-0903">Direct protein sequencing</keyword>
<keyword id="KW-0872">Ion channel impairing toxin</keyword>
<keyword id="KW-0528">Neurotoxin</keyword>
<keyword id="KW-0629">Postsynaptic neurotoxin</keyword>
<keyword id="KW-0964">Secreted</keyword>
<keyword id="KW-0800">Toxin</keyword>
<proteinExistence type="evidence at protein level"/>
<organism>
    <name type="scientific">Micrurus pyrrhocryptus</name>
    <name type="common">Coral snake</name>
    <dbReference type="NCBI Taxonomy" id="129468"/>
    <lineage>
        <taxon>Eukaryota</taxon>
        <taxon>Metazoa</taxon>
        <taxon>Chordata</taxon>
        <taxon>Craniata</taxon>
        <taxon>Vertebrata</taxon>
        <taxon>Euteleostomi</taxon>
        <taxon>Lepidosauria</taxon>
        <taxon>Squamata</taxon>
        <taxon>Bifurcata</taxon>
        <taxon>Unidentata</taxon>
        <taxon>Episquamata</taxon>
        <taxon>Toxicofera</taxon>
        <taxon>Serpentes</taxon>
        <taxon>Colubroidea</taxon>
        <taxon>Elapidae</taxon>
        <taxon>Elapinae</taxon>
        <taxon>Micrurus</taxon>
    </lineage>
</organism>
<protein>
    <recommendedName>
        <fullName>Weak neurotoxin E3</fullName>
    </recommendedName>
</protein>
<evidence type="ECO:0000250" key="1">
    <source>
        <dbReference type="UniProtKB" id="P60775"/>
    </source>
</evidence>
<evidence type="ECO:0000269" key="2">
    <source>
    </source>
</evidence>
<evidence type="ECO:0000305" key="3"/>
<feature type="chain" id="PRO_0000377751" description="Weak neurotoxin E3" evidence="2">
    <location>
        <begin position="1"/>
        <end position="27" status="greater than"/>
    </location>
</feature>
<feature type="non-terminal residue">
    <location>
        <position position="27"/>
    </location>
</feature>
<name>3S1E3_MICPY</name>
<dbReference type="GO" id="GO:0005576">
    <property type="term" value="C:extracellular region"/>
    <property type="evidence" value="ECO:0007669"/>
    <property type="project" value="UniProtKB-SubCell"/>
</dbReference>
<dbReference type="GO" id="GO:0030550">
    <property type="term" value="F:acetylcholine receptor inhibitor activity"/>
    <property type="evidence" value="ECO:0007669"/>
    <property type="project" value="UniProtKB-KW"/>
</dbReference>
<dbReference type="GO" id="GO:0099106">
    <property type="term" value="F:ion channel regulator activity"/>
    <property type="evidence" value="ECO:0007669"/>
    <property type="project" value="UniProtKB-KW"/>
</dbReference>
<dbReference type="GO" id="GO:0090729">
    <property type="term" value="F:toxin activity"/>
    <property type="evidence" value="ECO:0007669"/>
    <property type="project" value="UniProtKB-KW"/>
</dbReference>
<reference key="1">
    <citation type="journal article" date="2009" name="Toxicon">
        <title>Biochemical characterization of the Micrurus pyrrhocryptus venom.</title>
        <authorList>
            <person name="Dokmetjian J.C."/>
            <person name="Del Canto S."/>
            <person name="Vinzon S."/>
            <person name="de Jimenez Bonino M.B."/>
        </authorList>
    </citation>
    <scope>PROTEIN SEQUENCE</scope>
    <scope>MASS SPECTROMETRY</scope>
    <scope>SUBCELLULAR LOCATION</scope>
    <source>
        <tissue>Venom</tissue>
    </source>
</reference>
<comment type="function">
    <text evidence="1">Binds to muscle nicotinic acetylcholine receptor (nAChR) and inhibit acetylcholine from binding to the receptor, thereby impairing neuromuscular transmission.</text>
</comment>
<comment type="subcellular location">
    <subcellularLocation>
        <location evidence="2">Secreted</location>
    </subcellularLocation>
</comment>
<comment type="tissue specificity">
    <text evidence="3">Expressed by the venom gland.</text>
</comment>
<comment type="mass spectrometry" mass="7109.0" method="Electrospray" evidence="2"/>
<comment type="similarity">
    <text evidence="3">Belongs to the three-finger toxin family. Short-chain subfamily. Type I alpha-neurotoxin sub-subfamily.</text>
</comment>
<sequence length="27" mass="3068">LICFNDFSPTARTLEYCQIGITTYNPS</sequence>